<sequence length="556" mass="64013">MDGALINSVLYVSPRNGAHYFVELTEKHLLAFEMLNSMCLLENYDHVLLFLECQFGKSHNLAVIPFDIILVLFTLSTLSEYYKEPILRANDPYNTSRETLSRRALKLLQKYLAILKEFDSEQYNLYDLELLRCQFFLAIDTLTPKKQKWGFDRFRRTKSESGVTYRQNASVDPELDQAKTFKNPYRSYISCLEQRNTILGNRLLNLKLNEPGEFINMILWTLSNSLQESTPLFLSSHEIWMPLLEILIDLFSCRQDYFIQHEVAQNVSKSLFVQRLSESPLAVFFESLNTRNFANRFSEYVFLNCDYKLPSDNYATPVHPVYNGENTIVDTYIPTIKCSPLYKSQKSLALRRKLIGSCFKLLLRVPDGHRLITPRIVADDVIQGISRTLASFNDILQFKKFFMTENLSQESYFIPLLAEGTLSEILKDTQECVVILTLVENLSDGVSFCNEVIGLVKSKCFAFTEQCSQASYEEAVLNIEKCDVCLLVLLRYLLHLIGTEAILDAKEQLEMLHAIEKNDSGRRQWAKALNLGNDPPLLYPIVSQMFGVHDKSVIIE</sequence>
<dbReference type="EMBL" id="Z46659">
    <property type="protein sequence ID" value="CAA86632.1"/>
    <property type="molecule type" value="Genomic_DNA"/>
</dbReference>
<dbReference type="EMBL" id="BK006946">
    <property type="protein sequence ID" value="DAA09875.1"/>
    <property type="molecule type" value="Genomic_DNA"/>
</dbReference>
<dbReference type="PIR" id="S49754">
    <property type="entry name" value="S49754"/>
</dbReference>
<dbReference type="RefSeq" id="NP_013689.1">
    <property type="nucleotide sequence ID" value="NM_001182381.1"/>
</dbReference>
<dbReference type="PDB" id="7LTO">
    <property type="method" value="EM"/>
    <property type="resolution" value="3.20 A"/>
    <property type="chains" value="A=1-556"/>
</dbReference>
<dbReference type="PDB" id="7OGG">
    <property type="method" value="X-ray"/>
    <property type="resolution" value="3.29 A"/>
    <property type="chains" value="R=1-556"/>
</dbReference>
<dbReference type="PDB" id="7SDE">
    <property type="method" value="EM"/>
    <property type="resolution" value="3.20 A"/>
    <property type="chains" value="A=1-556"/>
</dbReference>
<dbReference type="PDB" id="7YQH">
    <property type="method" value="EM"/>
    <property type="resolution" value="5.60 A"/>
    <property type="chains" value="E=1-556"/>
</dbReference>
<dbReference type="PDB" id="8HQS">
    <property type="method" value="EM"/>
    <property type="resolution" value="3.20 A"/>
    <property type="chains" value="E=1-556"/>
</dbReference>
<dbReference type="PDB" id="8I4W">
    <property type="method" value="EM"/>
    <property type="resolution" value="6.01 A"/>
    <property type="chains" value="E=1-556"/>
</dbReference>
<dbReference type="PDB" id="8I4X">
    <property type="method" value="EM"/>
    <property type="resolution" value="8.50 A"/>
    <property type="chains" value="E=1-556"/>
</dbReference>
<dbReference type="PDB" id="8T8E">
    <property type="method" value="EM"/>
    <property type="resolution" value="3.30 A"/>
    <property type="chains" value="C=1-556"/>
</dbReference>
<dbReference type="PDB" id="8T8F">
    <property type="method" value="EM"/>
    <property type="resolution" value="4.80 A"/>
    <property type="chains" value="C=1-556"/>
</dbReference>
<dbReference type="PDBsum" id="7LTO"/>
<dbReference type="PDBsum" id="7OGG"/>
<dbReference type="PDBsum" id="7SDE"/>
<dbReference type="PDBsum" id="7YQH"/>
<dbReference type="PDBsum" id="8HQS"/>
<dbReference type="PDBsum" id="8I4W"/>
<dbReference type="PDBsum" id="8I4X"/>
<dbReference type="PDBsum" id="8T8E"/>
<dbReference type="PDBsum" id="8T8F"/>
<dbReference type="EMDB" id="EMD-23517"/>
<dbReference type="EMDB" id="EMD-34025"/>
<dbReference type="EMDB" id="EMD-34953"/>
<dbReference type="EMDB" id="EMD-35186"/>
<dbReference type="EMDB" id="EMD-35187"/>
<dbReference type="EMDB" id="EMD-41097"/>
<dbReference type="EMDB" id="EMD-41098"/>
<dbReference type="SMR" id="Q03718"/>
<dbReference type="BioGRID" id="35146">
    <property type="interactions" value="456"/>
</dbReference>
<dbReference type="ComplexPortal" id="CPX-1364">
    <property type="entry name" value="SMC5-SMC6 SUMO ligase complex"/>
</dbReference>
<dbReference type="DIP" id="DIP-4547N"/>
<dbReference type="FunCoup" id="Q03718">
    <property type="interactions" value="72"/>
</dbReference>
<dbReference type="IntAct" id="Q03718">
    <property type="interactions" value="28"/>
</dbReference>
<dbReference type="STRING" id="4932.YML023C"/>
<dbReference type="iPTMnet" id="Q03718"/>
<dbReference type="PaxDb" id="4932-YML023C"/>
<dbReference type="PeptideAtlas" id="Q03718"/>
<dbReference type="EnsemblFungi" id="YML023C_mRNA">
    <property type="protein sequence ID" value="YML023C"/>
    <property type="gene ID" value="YML023C"/>
</dbReference>
<dbReference type="GeneID" id="854985"/>
<dbReference type="KEGG" id="sce:YML023C"/>
<dbReference type="AGR" id="SGD:S000004485"/>
<dbReference type="SGD" id="S000004485">
    <property type="gene designation" value="NSE5"/>
</dbReference>
<dbReference type="VEuPathDB" id="FungiDB:YML023C"/>
<dbReference type="eggNOG" id="ENOG502QU63">
    <property type="taxonomic scope" value="Eukaryota"/>
</dbReference>
<dbReference type="HOGENOM" id="CLU_035923_0_0_1"/>
<dbReference type="InParanoid" id="Q03718"/>
<dbReference type="OMA" id="LLRCQLF"/>
<dbReference type="OrthoDB" id="4050598at2759"/>
<dbReference type="BioCyc" id="YEAST:G3O-32625-MONOMER"/>
<dbReference type="BioGRID-ORCS" id="854985">
    <property type="hits" value="0 hits in 10 CRISPR screens"/>
</dbReference>
<dbReference type="PRO" id="PR:Q03718"/>
<dbReference type="Proteomes" id="UP000002311">
    <property type="component" value="Chromosome XIII"/>
</dbReference>
<dbReference type="RNAct" id="Q03718">
    <property type="molecule type" value="protein"/>
</dbReference>
<dbReference type="GO" id="GO:0000781">
    <property type="term" value="C:chromosome, telomeric region"/>
    <property type="evidence" value="ECO:0000303"/>
    <property type="project" value="ComplexPortal"/>
</dbReference>
<dbReference type="GO" id="GO:0005634">
    <property type="term" value="C:nucleus"/>
    <property type="evidence" value="ECO:0007005"/>
    <property type="project" value="SGD"/>
</dbReference>
<dbReference type="GO" id="GO:0030915">
    <property type="term" value="C:Smc5-Smc6 complex"/>
    <property type="evidence" value="ECO:0000314"/>
    <property type="project" value="SGD"/>
</dbReference>
<dbReference type="GO" id="GO:0042030">
    <property type="term" value="F:ATPase inhibitor activity"/>
    <property type="evidence" value="ECO:0000314"/>
    <property type="project" value="SGD"/>
</dbReference>
<dbReference type="GO" id="GO:0140588">
    <property type="term" value="P:chromatin looping"/>
    <property type="evidence" value="ECO:0000303"/>
    <property type="project" value="ComplexPortal"/>
</dbReference>
<dbReference type="GO" id="GO:0006281">
    <property type="term" value="P:DNA repair"/>
    <property type="evidence" value="ECO:0000315"/>
    <property type="project" value="SGD"/>
</dbReference>
<dbReference type="GO" id="GO:0000724">
    <property type="term" value="P:double-strand break repair via homologous recombination"/>
    <property type="evidence" value="ECO:0000303"/>
    <property type="project" value="ComplexPortal"/>
</dbReference>
<dbReference type="GO" id="GO:0032204">
    <property type="term" value="P:regulation of telomere maintenance"/>
    <property type="evidence" value="ECO:0000303"/>
    <property type="project" value="ComplexPortal"/>
</dbReference>
<dbReference type="InterPro" id="IPR014803">
    <property type="entry name" value="DNA_repair_Nse5/Nse6"/>
</dbReference>
<dbReference type="Pfam" id="PF08691">
    <property type="entry name" value="Nse5"/>
    <property type="match status" value="1"/>
</dbReference>
<gene>
    <name type="primary">NSE5</name>
    <name type="ordered locus">YML023C</name>
</gene>
<name>NSE5_YEAST</name>
<proteinExistence type="evidence at protein level"/>
<evidence type="ECO:0000250" key="1">
    <source>
        <dbReference type="UniProtKB" id="O94668"/>
    </source>
</evidence>
<evidence type="ECO:0000269" key="2">
    <source>
    </source>
</evidence>
<evidence type="ECO:0000269" key="3">
    <source>
    </source>
</evidence>
<evidence type="ECO:0000269" key="4">
    <source>
    </source>
</evidence>
<evidence type="ECO:0007829" key="5">
    <source>
        <dbReference type="PDB" id="7LTO"/>
    </source>
</evidence>
<evidence type="ECO:0007829" key="6">
    <source>
        <dbReference type="PDB" id="7OGG"/>
    </source>
</evidence>
<evidence type="ECO:0007829" key="7">
    <source>
        <dbReference type="PDB" id="7SDE"/>
    </source>
</evidence>
<evidence type="ECO:0007829" key="8">
    <source>
        <dbReference type="PDB" id="8HQS"/>
    </source>
</evidence>
<organism>
    <name type="scientific">Saccharomyces cerevisiae (strain ATCC 204508 / S288c)</name>
    <name type="common">Baker's yeast</name>
    <dbReference type="NCBI Taxonomy" id="559292"/>
    <lineage>
        <taxon>Eukaryota</taxon>
        <taxon>Fungi</taxon>
        <taxon>Dikarya</taxon>
        <taxon>Ascomycota</taxon>
        <taxon>Saccharomycotina</taxon>
        <taxon>Saccharomycetes</taxon>
        <taxon>Saccharomycetales</taxon>
        <taxon>Saccharomycetaceae</taxon>
        <taxon>Saccharomyces</taxon>
    </lineage>
</organism>
<comment type="function">
    <text>Acts in a DNA repair pathway for removal of UV-induced DNA damage that is distinct from classical nucleotide excision repair and in repair of ionizing radiation damage. Functions in homologous recombination repair of DNA double strand breaks and in recovery of stalled replication forks.</text>
</comment>
<comment type="subunit">
    <text evidence="3 4">Component of the Smc5-Smc6 complex which consists of KRE29, MMS21, NSE1, NSE3, NSE4, NSE5, SMC5 and SMC6. Interacts with KRE29.</text>
</comment>
<comment type="interaction">
    <interactant intactId="EBI-27756">
        <id>Q03718</id>
    </interactant>
    <interactant intactId="EBI-22506">
        <id>P40026</id>
        <label>KRE29</label>
    </interactant>
    <organismsDiffer>false</organismsDiffer>
    <experiments>4</experiments>
</comment>
<comment type="interaction">
    <interactant intactId="EBI-27756">
        <id>Q03718</id>
    </interactant>
    <interactant intactId="EBI-34125">
        <id>Q08204</id>
        <label>SMC5</label>
    </interactant>
    <organismsDiffer>false</organismsDiffer>
    <experiments>4</experiments>
</comment>
<comment type="subcellular location">
    <subcellularLocation>
        <location evidence="3">Nucleus</location>
    </subcellularLocation>
    <subcellularLocation>
        <location evidence="1">Chromosome</location>
    </subcellularLocation>
</comment>
<comment type="miscellaneous">
    <text evidence="2">Present with 907 molecules/cell in log phase SD medium.</text>
</comment>
<keyword id="KW-0002">3D-structure</keyword>
<keyword id="KW-0158">Chromosome</keyword>
<keyword id="KW-0227">DNA damage</keyword>
<keyword id="KW-0233">DNA recombination</keyword>
<keyword id="KW-0234">DNA repair</keyword>
<keyword id="KW-0539">Nucleus</keyword>
<keyword id="KW-1185">Reference proteome</keyword>
<reference key="1">
    <citation type="journal article" date="1997" name="Nature">
        <title>The nucleotide sequence of Saccharomyces cerevisiae chromosome XIII.</title>
        <authorList>
            <person name="Bowman S."/>
            <person name="Churcher C.M."/>
            <person name="Badcock K."/>
            <person name="Brown D."/>
            <person name="Chillingworth T."/>
            <person name="Connor R."/>
            <person name="Dedman K."/>
            <person name="Devlin K."/>
            <person name="Gentles S."/>
            <person name="Hamlin N."/>
            <person name="Hunt S."/>
            <person name="Jagels K."/>
            <person name="Lye G."/>
            <person name="Moule S."/>
            <person name="Odell C."/>
            <person name="Pearson D."/>
            <person name="Rajandream M.A."/>
            <person name="Rice P."/>
            <person name="Skelton J."/>
            <person name="Walsh S.V."/>
            <person name="Whitehead S."/>
            <person name="Barrell B.G."/>
        </authorList>
    </citation>
    <scope>NUCLEOTIDE SEQUENCE [LARGE SCALE GENOMIC DNA]</scope>
    <source>
        <strain>ATCC 204508 / S288c</strain>
    </source>
</reference>
<reference key="2">
    <citation type="journal article" date="2014" name="G3 (Bethesda)">
        <title>The reference genome sequence of Saccharomyces cerevisiae: Then and now.</title>
        <authorList>
            <person name="Engel S.R."/>
            <person name="Dietrich F.S."/>
            <person name="Fisk D.G."/>
            <person name="Binkley G."/>
            <person name="Balakrishnan R."/>
            <person name="Costanzo M.C."/>
            <person name="Dwight S.S."/>
            <person name="Hitz B.C."/>
            <person name="Karra K."/>
            <person name="Nash R.S."/>
            <person name="Weng S."/>
            <person name="Wong E.D."/>
            <person name="Lloyd P."/>
            <person name="Skrzypek M.S."/>
            <person name="Miyasato S.R."/>
            <person name="Simison M."/>
            <person name="Cherry J.M."/>
        </authorList>
    </citation>
    <scope>GENOME REANNOTATION</scope>
    <source>
        <strain>ATCC 204508 / S288c</strain>
    </source>
</reference>
<reference key="3">
    <citation type="journal article" date="2003" name="Mol. Cell">
        <title>Assigning function to yeast proteins by integration of technologies.</title>
        <authorList>
            <person name="Hazbun T.R."/>
            <person name="Malmstroem L."/>
            <person name="Anderson S."/>
            <person name="Graczyk B.J."/>
            <person name="Fox B."/>
            <person name="Riffle M."/>
            <person name="Sundin B.A."/>
            <person name="Aranda J.D."/>
            <person name="McDonald W.H."/>
            <person name="Chiu C.-H."/>
            <person name="Snydsman B.E."/>
            <person name="Bradley P."/>
            <person name="Muller E.G.D."/>
            <person name="Fields S."/>
            <person name="Baker D."/>
            <person name="Yates J.R. III"/>
            <person name="Davis T.N."/>
        </authorList>
    </citation>
    <scope>IDENTIFICATION BY MASS SPECTROMETRY</scope>
    <scope>SUBCELLULAR LOCATION [LARGE SCALE ANALYSIS]</scope>
    <scope>INTERACTION WITH KRE29</scope>
</reference>
<reference key="4">
    <citation type="journal article" date="2003" name="Nature">
        <title>Global analysis of protein expression in yeast.</title>
        <authorList>
            <person name="Ghaemmaghami S."/>
            <person name="Huh W.-K."/>
            <person name="Bower K."/>
            <person name="Howson R.W."/>
            <person name="Belle A."/>
            <person name="Dephoure N."/>
            <person name="O'Shea E.K."/>
            <person name="Weissman J.S."/>
        </authorList>
    </citation>
    <scope>LEVEL OF PROTEIN EXPRESSION [LARGE SCALE ANALYSIS]</scope>
</reference>
<reference key="5">
    <citation type="journal article" date="2005" name="Proc. Natl. Acad. Sci. U.S.A.">
        <title>A SUMO ligase is part of a nuclear multiprotein complex that affects DNA repair and chromosomal organization.</title>
        <authorList>
            <person name="Zhao X."/>
            <person name="Blobel G."/>
        </authorList>
    </citation>
    <scope>SUBUNIT</scope>
</reference>
<accession>Q03718</accession>
<accession>D6VZF1</accession>
<feature type="chain" id="PRO_0000057963" description="Non-structural maintenance of chromosome element 5">
    <location>
        <begin position="1"/>
        <end position="556"/>
    </location>
</feature>
<feature type="turn" evidence="8">
    <location>
        <begin position="4"/>
        <end position="6"/>
    </location>
</feature>
<feature type="helix" evidence="5">
    <location>
        <begin position="26"/>
        <end position="40"/>
    </location>
</feature>
<feature type="helix" evidence="5">
    <location>
        <begin position="44"/>
        <end position="52"/>
    </location>
</feature>
<feature type="turn" evidence="5">
    <location>
        <begin position="53"/>
        <end position="56"/>
    </location>
</feature>
<feature type="strand" evidence="5">
    <location>
        <begin position="57"/>
        <end position="59"/>
    </location>
</feature>
<feature type="helix" evidence="5">
    <location>
        <begin position="66"/>
        <end position="75"/>
    </location>
</feature>
<feature type="turn" evidence="5">
    <location>
        <begin position="80"/>
        <end position="82"/>
    </location>
</feature>
<feature type="helix" evidence="5">
    <location>
        <begin position="84"/>
        <end position="90"/>
    </location>
</feature>
<feature type="strand" evidence="6">
    <location>
        <begin position="95"/>
        <end position="98"/>
    </location>
</feature>
<feature type="helix" evidence="5">
    <location>
        <begin position="100"/>
        <end position="115"/>
    </location>
</feature>
<feature type="turn" evidence="8">
    <location>
        <begin position="120"/>
        <end position="122"/>
    </location>
</feature>
<feature type="helix" evidence="5">
    <location>
        <begin position="127"/>
        <end position="139"/>
    </location>
</feature>
<feature type="strand" evidence="8">
    <location>
        <begin position="186"/>
        <end position="188"/>
    </location>
</feature>
<feature type="helix" evidence="8">
    <location>
        <begin position="191"/>
        <end position="194"/>
    </location>
</feature>
<feature type="strand" evidence="8">
    <location>
        <begin position="196"/>
        <end position="202"/>
    </location>
</feature>
<feature type="turn" evidence="5">
    <location>
        <begin position="205"/>
        <end position="207"/>
    </location>
</feature>
<feature type="strand" evidence="5">
    <location>
        <begin position="208"/>
        <end position="210"/>
    </location>
</feature>
<feature type="turn" evidence="8">
    <location>
        <begin position="211"/>
        <end position="213"/>
    </location>
</feature>
<feature type="helix" evidence="5">
    <location>
        <begin position="216"/>
        <end position="219"/>
    </location>
</feature>
<feature type="strand" evidence="5">
    <location>
        <begin position="222"/>
        <end position="226"/>
    </location>
</feature>
<feature type="helix" evidence="5">
    <location>
        <begin position="230"/>
        <end position="238"/>
    </location>
</feature>
<feature type="helix" evidence="5">
    <location>
        <begin position="240"/>
        <end position="254"/>
    </location>
</feature>
<feature type="helix" evidence="5">
    <location>
        <begin position="256"/>
        <end position="259"/>
    </location>
</feature>
<feature type="helix" evidence="7">
    <location>
        <begin position="269"/>
        <end position="275"/>
    </location>
</feature>
<feature type="turn" evidence="7">
    <location>
        <begin position="276"/>
        <end position="278"/>
    </location>
</feature>
<feature type="turn" evidence="5">
    <location>
        <begin position="280"/>
        <end position="282"/>
    </location>
</feature>
<feature type="turn" evidence="5">
    <location>
        <begin position="284"/>
        <end position="286"/>
    </location>
</feature>
<feature type="helix" evidence="5">
    <location>
        <begin position="294"/>
        <end position="301"/>
    </location>
</feature>
<feature type="strand" evidence="5">
    <location>
        <begin position="302"/>
        <end position="305"/>
    </location>
</feature>
<feature type="helix" evidence="8">
    <location>
        <begin position="310"/>
        <end position="312"/>
    </location>
</feature>
<feature type="turn" evidence="5">
    <location>
        <begin position="323"/>
        <end position="326"/>
    </location>
</feature>
<feature type="helix" evidence="5">
    <location>
        <begin position="340"/>
        <end position="362"/>
    </location>
</feature>
<feature type="strand" evidence="5">
    <location>
        <begin position="372"/>
        <end position="374"/>
    </location>
</feature>
<feature type="strand" evidence="5">
    <location>
        <begin position="378"/>
        <end position="380"/>
    </location>
</feature>
<feature type="helix" evidence="5">
    <location>
        <begin position="381"/>
        <end position="390"/>
    </location>
</feature>
<feature type="helix" evidence="5">
    <location>
        <begin position="395"/>
        <end position="402"/>
    </location>
</feature>
<feature type="turn" evidence="5">
    <location>
        <begin position="407"/>
        <end position="409"/>
    </location>
</feature>
<feature type="turn" evidence="6">
    <location>
        <begin position="410"/>
        <end position="412"/>
    </location>
</feature>
<feature type="helix" evidence="5">
    <location>
        <begin position="414"/>
        <end position="429"/>
    </location>
</feature>
<feature type="helix" evidence="7">
    <location>
        <begin position="438"/>
        <end position="441"/>
    </location>
</feature>
<feature type="helix" evidence="7">
    <location>
        <begin position="445"/>
        <end position="449"/>
    </location>
</feature>
<feature type="helix" evidence="7">
    <location>
        <begin position="452"/>
        <end position="456"/>
    </location>
</feature>
<feature type="turn" evidence="7">
    <location>
        <begin position="457"/>
        <end position="459"/>
    </location>
</feature>
<feature type="strand" evidence="7">
    <location>
        <begin position="460"/>
        <end position="462"/>
    </location>
</feature>
<feature type="strand" evidence="7">
    <location>
        <begin position="465"/>
        <end position="467"/>
    </location>
</feature>
<feature type="helix" evidence="7">
    <location>
        <begin position="472"/>
        <end position="495"/>
    </location>
</feature>
<feature type="helix" evidence="5">
    <location>
        <begin position="501"/>
        <end position="510"/>
    </location>
</feature>
<feature type="helix" evidence="7">
    <location>
        <begin position="519"/>
        <end position="528"/>
    </location>
</feature>
<feature type="helix" evidence="7">
    <location>
        <begin position="540"/>
        <end position="546"/>
    </location>
</feature>
<feature type="turn" evidence="8">
    <location>
        <begin position="548"/>
        <end position="553"/>
    </location>
</feature>
<protein>
    <recommendedName>
        <fullName>Non-structural maintenance of chromosome element 5</fullName>
        <shortName>Non-SMC element 5</shortName>
    </recommendedName>
</protein>